<protein>
    <recommendedName>
        <fullName evidence="1">Regulatory protein RecX</fullName>
    </recommendedName>
</protein>
<keyword id="KW-0963">Cytoplasm</keyword>
<keyword id="KW-1185">Reference proteome</keyword>
<feature type="chain" id="PRO_1000164028" description="Regulatory protein RecX">
    <location>
        <begin position="1"/>
        <end position="258"/>
    </location>
</feature>
<reference key="1">
    <citation type="journal article" date="2009" name="BMC Genomics">
        <title>Evidence for niche adaptation in the genome of the bovine pathogen Streptococcus uberis.</title>
        <authorList>
            <person name="Ward P.N."/>
            <person name="Holden M.T.G."/>
            <person name="Leigh J.A."/>
            <person name="Lennard N."/>
            <person name="Bignell A."/>
            <person name="Barron A."/>
            <person name="Clark L."/>
            <person name="Quail M.A."/>
            <person name="Woodward J."/>
            <person name="Barrell B.G."/>
            <person name="Egan S.A."/>
            <person name="Field T.R."/>
            <person name="Maskell D."/>
            <person name="Kehoe M."/>
            <person name="Dowson C.G."/>
            <person name="Chanter N."/>
            <person name="Whatmore A.M."/>
            <person name="Bentley S.D."/>
            <person name="Parkhill J."/>
        </authorList>
    </citation>
    <scope>NUCLEOTIDE SEQUENCE [LARGE SCALE GENOMIC DNA]</scope>
    <source>
        <strain>ATCC BAA-854 / 0140J</strain>
    </source>
</reference>
<accession>B9DV29</accession>
<dbReference type="EMBL" id="AM946015">
    <property type="protein sequence ID" value="CAR42969.1"/>
    <property type="molecule type" value="Genomic_DNA"/>
</dbReference>
<dbReference type="RefSeq" id="WP_015911692.1">
    <property type="nucleotide sequence ID" value="NC_012004.1"/>
</dbReference>
<dbReference type="SMR" id="B9DV29"/>
<dbReference type="STRING" id="218495.SUB1372"/>
<dbReference type="KEGG" id="sub:SUB1372"/>
<dbReference type="eggNOG" id="COG2137">
    <property type="taxonomic scope" value="Bacteria"/>
</dbReference>
<dbReference type="HOGENOM" id="CLU_066607_4_0_9"/>
<dbReference type="OrthoDB" id="5421057at2"/>
<dbReference type="Proteomes" id="UP000000449">
    <property type="component" value="Chromosome"/>
</dbReference>
<dbReference type="GO" id="GO:0005737">
    <property type="term" value="C:cytoplasm"/>
    <property type="evidence" value="ECO:0007669"/>
    <property type="project" value="UniProtKB-SubCell"/>
</dbReference>
<dbReference type="GO" id="GO:0006282">
    <property type="term" value="P:regulation of DNA repair"/>
    <property type="evidence" value="ECO:0007669"/>
    <property type="project" value="UniProtKB-UniRule"/>
</dbReference>
<dbReference type="Gene3D" id="1.10.10.10">
    <property type="entry name" value="Winged helix-like DNA-binding domain superfamily/Winged helix DNA-binding domain"/>
    <property type="match status" value="4"/>
</dbReference>
<dbReference type="HAMAP" id="MF_01114">
    <property type="entry name" value="RecX"/>
    <property type="match status" value="1"/>
</dbReference>
<dbReference type="InterPro" id="IPR053926">
    <property type="entry name" value="RecX_HTH_1st"/>
</dbReference>
<dbReference type="InterPro" id="IPR053924">
    <property type="entry name" value="RecX_HTH_2nd"/>
</dbReference>
<dbReference type="InterPro" id="IPR053925">
    <property type="entry name" value="RecX_HTH_3rd"/>
</dbReference>
<dbReference type="InterPro" id="IPR003783">
    <property type="entry name" value="Regulatory_RecX"/>
</dbReference>
<dbReference type="InterPro" id="IPR036388">
    <property type="entry name" value="WH-like_DNA-bd_sf"/>
</dbReference>
<dbReference type="NCBIfam" id="NF010733">
    <property type="entry name" value="PRK14135.1"/>
    <property type="match status" value="1"/>
</dbReference>
<dbReference type="PANTHER" id="PTHR33602">
    <property type="entry name" value="REGULATORY PROTEIN RECX FAMILY PROTEIN"/>
    <property type="match status" value="1"/>
</dbReference>
<dbReference type="PANTHER" id="PTHR33602:SF1">
    <property type="entry name" value="REGULATORY PROTEIN RECX FAMILY PROTEIN"/>
    <property type="match status" value="1"/>
</dbReference>
<dbReference type="Pfam" id="PF21982">
    <property type="entry name" value="RecX_HTH1"/>
    <property type="match status" value="1"/>
</dbReference>
<dbReference type="Pfam" id="PF02631">
    <property type="entry name" value="RecX_HTH2"/>
    <property type="match status" value="1"/>
</dbReference>
<dbReference type="Pfam" id="PF21981">
    <property type="entry name" value="RecX_HTH3"/>
    <property type="match status" value="1"/>
</dbReference>
<sequence length="258" mass="30302">MKIQKIEKKKRLYLLECDNGDSLYVTEDTIVHFMLSKGMEISPEQLESIKQFAQFSYGKNLALYYISFQVRTQKQVYDYLKKHDLENTIIQKIIEELIKENWINDQKYVESFLRQNMTNGDKGPQLIKQKLMQKGISDKIIEKAISEVDFYPIAEKAALKMISRYQDKLPRKALQDKLTQLLINKGFSYDLVKAVNGNLSIETDQENTLDLLEKEADKQLRKLSKRYEGYALRQKLFQALYRKGYDSDDIQSLLSEIL</sequence>
<organism>
    <name type="scientific">Streptococcus uberis (strain ATCC BAA-854 / 0140J)</name>
    <dbReference type="NCBI Taxonomy" id="218495"/>
    <lineage>
        <taxon>Bacteria</taxon>
        <taxon>Bacillati</taxon>
        <taxon>Bacillota</taxon>
        <taxon>Bacilli</taxon>
        <taxon>Lactobacillales</taxon>
        <taxon>Streptococcaceae</taxon>
        <taxon>Streptococcus</taxon>
    </lineage>
</organism>
<comment type="function">
    <text evidence="1">Modulates RecA activity.</text>
</comment>
<comment type="subcellular location">
    <subcellularLocation>
        <location evidence="1">Cytoplasm</location>
    </subcellularLocation>
</comment>
<comment type="similarity">
    <text evidence="1">Belongs to the RecX family.</text>
</comment>
<name>RECX_STRU0</name>
<proteinExistence type="inferred from homology"/>
<gene>
    <name evidence="1" type="primary">recX</name>
    <name type="ordered locus">SUB1372</name>
</gene>
<evidence type="ECO:0000255" key="1">
    <source>
        <dbReference type="HAMAP-Rule" id="MF_01114"/>
    </source>
</evidence>